<reference key="1">
    <citation type="submission" date="2008-02" db="EMBL/GenBank/DDBJ databases">
        <title>Complete sequence of Shewanella woodyi ATCC 51908.</title>
        <authorList>
            <consortium name="US DOE Joint Genome Institute"/>
            <person name="Copeland A."/>
            <person name="Lucas S."/>
            <person name="Lapidus A."/>
            <person name="Glavina del Rio T."/>
            <person name="Dalin E."/>
            <person name="Tice H."/>
            <person name="Bruce D."/>
            <person name="Goodwin L."/>
            <person name="Pitluck S."/>
            <person name="Sims D."/>
            <person name="Brettin T."/>
            <person name="Detter J.C."/>
            <person name="Han C."/>
            <person name="Kuske C.R."/>
            <person name="Schmutz J."/>
            <person name="Larimer F."/>
            <person name="Land M."/>
            <person name="Hauser L."/>
            <person name="Kyrpides N."/>
            <person name="Lykidis A."/>
            <person name="Zhao J.-S."/>
            <person name="Richardson P."/>
        </authorList>
    </citation>
    <scope>NUCLEOTIDE SEQUENCE [LARGE SCALE GENOMIC DNA]</scope>
    <source>
        <strain>ATCC 51908 / MS32</strain>
    </source>
</reference>
<organism>
    <name type="scientific">Shewanella woodyi (strain ATCC 51908 / MS32)</name>
    <dbReference type="NCBI Taxonomy" id="392500"/>
    <lineage>
        <taxon>Bacteria</taxon>
        <taxon>Pseudomonadati</taxon>
        <taxon>Pseudomonadota</taxon>
        <taxon>Gammaproteobacteria</taxon>
        <taxon>Alteromonadales</taxon>
        <taxon>Shewanellaceae</taxon>
        <taxon>Shewanella</taxon>
    </lineage>
</organism>
<evidence type="ECO:0000255" key="1">
    <source>
        <dbReference type="HAMAP-Rule" id="MF_01839"/>
    </source>
</evidence>
<protein>
    <recommendedName>
        <fullName evidence="1">Nucleoid occlusion factor SlmA</fullName>
    </recommendedName>
</protein>
<dbReference type="EMBL" id="CP000961">
    <property type="protein sequence ID" value="ACA88814.1"/>
    <property type="molecule type" value="Genomic_DNA"/>
</dbReference>
<dbReference type="RefSeq" id="WP_012327139.1">
    <property type="nucleotide sequence ID" value="NC_010506.1"/>
</dbReference>
<dbReference type="SMR" id="B1KL08"/>
<dbReference type="STRING" id="392500.Swoo_4564"/>
<dbReference type="KEGG" id="swd:Swoo_4564"/>
<dbReference type="eggNOG" id="COG1309">
    <property type="taxonomic scope" value="Bacteria"/>
</dbReference>
<dbReference type="HOGENOM" id="CLU_069356_5_0_6"/>
<dbReference type="Proteomes" id="UP000002168">
    <property type="component" value="Chromosome"/>
</dbReference>
<dbReference type="GO" id="GO:0043590">
    <property type="term" value="C:bacterial nucleoid"/>
    <property type="evidence" value="ECO:0007669"/>
    <property type="project" value="UniProtKB-UniRule"/>
</dbReference>
<dbReference type="GO" id="GO:0005737">
    <property type="term" value="C:cytoplasm"/>
    <property type="evidence" value="ECO:0007669"/>
    <property type="project" value="UniProtKB-UniRule"/>
</dbReference>
<dbReference type="GO" id="GO:0043565">
    <property type="term" value="F:sequence-specific DNA binding"/>
    <property type="evidence" value="ECO:0007669"/>
    <property type="project" value="UniProtKB-UniRule"/>
</dbReference>
<dbReference type="GO" id="GO:0051301">
    <property type="term" value="P:cell division"/>
    <property type="evidence" value="ECO:0007669"/>
    <property type="project" value="UniProtKB-KW"/>
</dbReference>
<dbReference type="GO" id="GO:0010974">
    <property type="term" value="P:negative regulation of division septum assembly"/>
    <property type="evidence" value="ECO:0007669"/>
    <property type="project" value="InterPro"/>
</dbReference>
<dbReference type="Gene3D" id="1.10.357.10">
    <property type="entry name" value="Tetracycline Repressor, domain 2"/>
    <property type="match status" value="1"/>
</dbReference>
<dbReference type="HAMAP" id="MF_01839">
    <property type="entry name" value="NO_factor_SlmA"/>
    <property type="match status" value="1"/>
</dbReference>
<dbReference type="InterPro" id="IPR009057">
    <property type="entry name" value="Homeodomain-like_sf"/>
</dbReference>
<dbReference type="InterPro" id="IPR050624">
    <property type="entry name" value="HTH-type_Tx_Regulator"/>
</dbReference>
<dbReference type="InterPro" id="IPR001647">
    <property type="entry name" value="HTH_TetR"/>
</dbReference>
<dbReference type="InterPro" id="IPR023769">
    <property type="entry name" value="NO_SlmA"/>
</dbReference>
<dbReference type="InterPro" id="IPR054580">
    <property type="entry name" value="SlmA-like_C"/>
</dbReference>
<dbReference type="NCBIfam" id="NF007015">
    <property type="entry name" value="PRK09480.1"/>
    <property type="match status" value="1"/>
</dbReference>
<dbReference type="PANTHER" id="PTHR43479">
    <property type="entry name" value="ACREF/ENVCD OPERON REPRESSOR-RELATED"/>
    <property type="match status" value="1"/>
</dbReference>
<dbReference type="PANTHER" id="PTHR43479:SF11">
    <property type="entry name" value="ACREF_ENVCD OPERON REPRESSOR-RELATED"/>
    <property type="match status" value="1"/>
</dbReference>
<dbReference type="Pfam" id="PF22276">
    <property type="entry name" value="SlmA-like_C"/>
    <property type="match status" value="1"/>
</dbReference>
<dbReference type="Pfam" id="PF00440">
    <property type="entry name" value="TetR_N"/>
    <property type="match status" value="1"/>
</dbReference>
<dbReference type="SUPFAM" id="SSF46689">
    <property type="entry name" value="Homeodomain-like"/>
    <property type="match status" value="1"/>
</dbReference>
<dbReference type="PROSITE" id="PS50977">
    <property type="entry name" value="HTH_TETR_2"/>
    <property type="match status" value="1"/>
</dbReference>
<comment type="function">
    <text evidence="1">Required for nucleoid occlusion (NO) phenomenon, which prevents Z-ring formation and cell division over the nucleoid. Acts as a DNA-associated cell division inhibitor that binds simultaneously chromosomal DNA and FtsZ, and disrupts the assembly of FtsZ polymers. SlmA-DNA-binding sequences (SBS) are dispersed on non-Ter regions of the chromosome, preventing FtsZ polymerization at these regions.</text>
</comment>
<comment type="subunit">
    <text evidence="1">Homodimer. Interacts with FtsZ.</text>
</comment>
<comment type="subcellular location">
    <subcellularLocation>
        <location evidence="1">Cytoplasm</location>
        <location evidence="1">Nucleoid</location>
    </subcellularLocation>
</comment>
<comment type="similarity">
    <text evidence="1">Belongs to the nucleoid occlusion factor SlmA family.</text>
</comment>
<proteinExistence type="inferred from homology"/>
<name>SLMA_SHEWM</name>
<accession>B1KL08</accession>
<keyword id="KW-0131">Cell cycle</keyword>
<keyword id="KW-0132">Cell division</keyword>
<keyword id="KW-0963">Cytoplasm</keyword>
<keyword id="KW-0238">DNA-binding</keyword>
<keyword id="KW-1185">Reference proteome</keyword>
<gene>
    <name evidence="1" type="primary">slmA</name>
    <name type="ordered locus">Swoo_4564</name>
</gene>
<sequence length="197" mass="22619">MAASPKINRREHILQCLATMLETNPGQRITTAKLAAEVGVSEAALYRHFPSKARMFEGLIDFIEESLLSRINLIMDEEKDTMKRCQHLLQLLLIFAERNPGISRLLNGDALLGEHDRLRSRIGQIFSKIETHLKQILREKTLREGKGFNLDEAILANLLLAVAEGRISQFVRSEFKQKPTTHFEEQWVFIQQQLLQS</sequence>
<feature type="chain" id="PRO_1000188404" description="Nucleoid occlusion factor SlmA">
    <location>
        <begin position="1"/>
        <end position="197"/>
    </location>
</feature>
<feature type="domain" description="HTH tetR-type" evidence="1">
    <location>
        <begin position="7"/>
        <end position="67"/>
    </location>
</feature>
<feature type="DNA-binding region" description="H-T-H motif" evidence="1">
    <location>
        <begin position="30"/>
        <end position="49"/>
    </location>
</feature>